<gene>
    <name evidence="1" type="primary">rpsO</name>
    <name type="ordered locus">CKL_1436</name>
</gene>
<reference key="1">
    <citation type="journal article" date="2008" name="Proc. Natl. Acad. Sci. U.S.A.">
        <title>The genome of Clostridium kluyveri, a strict anaerobe with unique metabolic features.</title>
        <authorList>
            <person name="Seedorf H."/>
            <person name="Fricke W.F."/>
            <person name="Veith B."/>
            <person name="Brueggemann H."/>
            <person name="Liesegang H."/>
            <person name="Strittmatter A."/>
            <person name="Miethke M."/>
            <person name="Buckel W."/>
            <person name="Hinderberger J."/>
            <person name="Li F."/>
            <person name="Hagemeier C."/>
            <person name="Thauer R.K."/>
            <person name="Gottschalk G."/>
        </authorList>
    </citation>
    <scope>NUCLEOTIDE SEQUENCE [LARGE SCALE GENOMIC DNA]</scope>
    <source>
        <strain>ATCC 8527 / DSM 555 / NBRC 12016 / NCIMB 10680 / K1</strain>
    </source>
</reference>
<protein>
    <recommendedName>
        <fullName evidence="1">Small ribosomal subunit protein uS15</fullName>
    </recommendedName>
    <alternativeName>
        <fullName evidence="2">30S ribosomal protein S15</fullName>
    </alternativeName>
</protein>
<evidence type="ECO:0000255" key="1">
    <source>
        <dbReference type="HAMAP-Rule" id="MF_01343"/>
    </source>
</evidence>
<evidence type="ECO:0000305" key="2"/>
<proteinExistence type="inferred from homology"/>
<dbReference type="EMBL" id="CP000673">
    <property type="protein sequence ID" value="EDK33478.1"/>
    <property type="molecule type" value="Genomic_DNA"/>
</dbReference>
<dbReference type="RefSeq" id="WP_012101825.1">
    <property type="nucleotide sequence ID" value="NC_009706.1"/>
</dbReference>
<dbReference type="SMR" id="A5N847"/>
<dbReference type="STRING" id="431943.CKL_1436"/>
<dbReference type="KEGG" id="ckl:CKL_1436"/>
<dbReference type="eggNOG" id="COG0184">
    <property type="taxonomic scope" value="Bacteria"/>
</dbReference>
<dbReference type="HOGENOM" id="CLU_148518_0_0_9"/>
<dbReference type="Proteomes" id="UP000002411">
    <property type="component" value="Chromosome"/>
</dbReference>
<dbReference type="GO" id="GO:0022627">
    <property type="term" value="C:cytosolic small ribosomal subunit"/>
    <property type="evidence" value="ECO:0007669"/>
    <property type="project" value="TreeGrafter"/>
</dbReference>
<dbReference type="GO" id="GO:0019843">
    <property type="term" value="F:rRNA binding"/>
    <property type="evidence" value="ECO:0007669"/>
    <property type="project" value="UniProtKB-UniRule"/>
</dbReference>
<dbReference type="GO" id="GO:0003735">
    <property type="term" value="F:structural constituent of ribosome"/>
    <property type="evidence" value="ECO:0007669"/>
    <property type="project" value="InterPro"/>
</dbReference>
<dbReference type="GO" id="GO:0006412">
    <property type="term" value="P:translation"/>
    <property type="evidence" value="ECO:0007669"/>
    <property type="project" value="UniProtKB-UniRule"/>
</dbReference>
<dbReference type="CDD" id="cd00353">
    <property type="entry name" value="Ribosomal_S15p_S13e"/>
    <property type="match status" value="1"/>
</dbReference>
<dbReference type="FunFam" id="1.10.287.10:FF:000002">
    <property type="entry name" value="30S ribosomal protein S15"/>
    <property type="match status" value="1"/>
</dbReference>
<dbReference type="Gene3D" id="6.10.250.3130">
    <property type="match status" value="1"/>
</dbReference>
<dbReference type="Gene3D" id="1.10.287.10">
    <property type="entry name" value="S15/NS1, RNA-binding"/>
    <property type="match status" value="1"/>
</dbReference>
<dbReference type="HAMAP" id="MF_01343_B">
    <property type="entry name" value="Ribosomal_uS15_B"/>
    <property type="match status" value="1"/>
</dbReference>
<dbReference type="InterPro" id="IPR000589">
    <property type="entry name" value="Ribosomal_uS15"/>
</dbReference>
<dbReference type="InterPro" id="IPR005290">
    <property type="entry name" value="Ribosomal_uS15_bac-type"/>
</dbReference>
<dbReference type="InterPro" id="IPR009068">
    <property type="entry name" value="uS15_NS1_RNA-bd_sf"/>
</dbReference>
<dbReference type="NCBIfam" id="TIGR00952">
    <property type="entry name" value="S15_bact"/>
    <property type="match status" value="1"/>
</dbReference>
<dbReference type="PANTHER" id="PTHR23321">
    <property type="entry name" value="RIBOSOMAL PROTEIN S15, BACTERIAL AND ORGANELLAR"/>
    <property type="match status" value="1"/>
</dbReference>
<dbReference type="PANTHER" id="PTHR23321:SF26">
    <property type="entry name" value="SMALL RIBOSOMAL SUBUNIT PROTEIN US15M"/>
    <property type="match status" value="1"/>
</dbReference>
<dbReference type="Pfam" id="PF00312">
    <property type="entry name" value="Ribosomal_S15"/>
    <property type="match status" value="1"/>
</dbReference>
<dbReference type="SMART" id="SM01387">
    <property type="entry name" value="Ribosomal_S15"/>
    <property type="match status" value="1"/>
</dbReference>
<dbReference type="SUPFAM" id="SSF47060">
    <property type="entry name" value="S15/NS1 RNA-binding domain"/>
    <property type="match status" value="1"/>
</dbReference>
<dbReference type="PROSITE" id="PS00362">
    <property type="entry name" value="RIBOSOMAL_S15"/>
    <property type="match status" value="1"/>
</dbReference>
<accession>A5N847</accession>
<keyword id="KW-1185">Reference proteome</keyword>
<keyword id="KW-0687">Ribonucleoprotein</keyword>
<keyword id="KW-0689">Ribosomal protein</keyword>
<keyword id="KW-0694">RNA-binding</keyword>
<keyword id="KW-0699">rRNA-binding</keyword>
<feature type="chain" id="PRO_0000354190" description="Small ribosomal subunit protein uS15">
    <location>
        <begin position="1"/>
        <end position="87"/>
    </location>
</feature>
<comment type="function">
    <text evidence="1">One of the primary rRNA binding proteins, it binds directly to 16S rRNA where it helps nucleate assembly of the platform of the 30S subunit by binding and bridging several RNA helices of the 16S rRNA.</text>
</comment>
<comment type="function">
    <text evidence="1">Forms an intersubunit bridge (bridge B4) with the 23S rRNA of the 50S subunit in the ribosome.</text>
</comment>
<comment type="subunit">
    <text evidence="1">Part of the 30S ribosomal subunit. Forms a bridge to the 50S subunit in the 70S ribosome, contacting the 23S rRNA.</text>
</comment>
<comment type="similarity">
    <text evidence="1">Belongs to the universal ribosomal protein uS15 family.</text>
</comment>
<sequence length="87" mass="10295">MEKAVKQEIMEKYARHEGDTGSPEVQIALLTTRINHLNEHLKIHKKDHHSRRGLLMMVGKRRGLLNYLIKQDIERYRAIIKALNLRK</sequence>
<organism>
    <name type="scientific">Clostridium kluyveri (strain ATCC 8527 / DSM 555 / NBRC 12016 / NCIMB 10680 / K1)</name>
    <dbReference type="NCBI Taxonomy" id="431943"/>
    <lineage>
        <taxon>Bacteria</taxon>
        <taxon>Bacillati</taxon>
        <taxon>Bacillota</taxon>
        <taxon>Clostridia</taxon>
        <taxon>Eubacteriales</taxon>
        <taxon>Clostridiaceae</taxon>
        <taxon>Clostridium</taxon>
    </lineage>
</organism>
<name>RS15_CLOK5</name>